<keyword id="KW-0489">Methyltransferase</keyword>
<keyword id="KW-0949">S-adenosyl-L-methionine</keyword>
<keyword id="KW-0808">Transferase</keyword>
<keyword id="KW-0819">tRNA processing</keyword>
<comment type="function">
    <text evidence="2">Catalyzes the formation of N(7)-methylguanine at position 46 (m7G46) in tRNA.</text>
</comment>
<comment type="catalytic activity">
    <reaction evidence="2">
        <text>guanosine(46) in tRNA + S-adenosyl-L-methionine = N(7)-methylguanosine(46) in tRNA + S-adenosyl-L-homocysteine</text>
        <dbReference type="Rhea" id="RHEA:42708"/>
        <dbReference type="Rhea" id="RHEA-COMP:10188"/>
        <dbReference type="Rhea" id="RHEA-COMP:10189"/>
        <dbReference type="ChEBI" id="CHEBI:57856"/>
        <dbReference type="ChEBI" id="CHEBI:59789"/>
        <dbReference type="ChEBI" id="CHEBI:74269"/>
        <dbReference type="ChEBI" id="CHEBI:74480"/>
        <dbReference type="EC" id="2.1.1.33"/>
    </reaction>
</comment>
<comment type="pathway">
    <text evidence="2">tRNA modification; N(7)-methylguanine-tRNA biosynthesis.</text>
</comment>
<comment type="similarity">
    <text evidence="2">Belongs to the class I-like SAM-binding methyltransferase superfamily. TrmB family.</text>
</comment>
<name>TRMB_XYLF2</name>
<reference key="1">
    <citation type="journal article" date="2010" name="J. Bacteriol.">
        <title>Whole genome sequences of two Xylella fastidiosa strains (M12 and M23) causing almond leaf scorch disease in California.</title>
        <authorList>
            <person name="Chen J."/>
            <person name="Xie G."/>
            <person name="Han S."/>
            <person name="Chertkov O."/>
            <person name="Sims D."/>
            <person name="Civerolo E.L."/>
        </authorList>
    </citation>
    <scope>NUCLEOTIDE SEQUENCE [LARGE SCALE GENOMIC DNA]</scope>
    <source>
        <strain>M23</strain>
    </source>
</reference>
<feature type="chain" id="PRO_1000136375" description="tRNA (guanine-N(7)-)-methyltransferase">
    <location>
        <begin position="1"/>
        <end position="244"/>
    </location>
</feature>
<feature type="active site" evidence="1">
    <location>
        <position position="150"/>
    </location>
</feature>
<feature type="binding site" evidence="2">
    <location>
        <position position="75"/>
    </location>
    <ligand>
        <name>S-adenosyl-L-methionine</name>
        <dbReference type="ChEBI" id="CHEBI:59789"/>
    </ligand>
</feature>
<feature type="binding site" evidence="2">
    <location>
        <position position="100"/>
    </location>
    <ligand>
        <name>S-adenosyl-L-methionine</name>
        <dbReference type="ChEBI" id="CHEBI:59789"/>
    </ligand>
</feature>
<feature type="binding site" evidence="2">
    <location>
        <position position="127"/>
    </location>
    <ligand>
        <name>S-adenosyl-L-methionine</name>
        <dbReference type="ChEBI" id="CHEBI:59789"/>
    </ligand>
</feature>
<feature type="binding site" evidence="2">
    <location>
        <position position="150"/>
    </location>
    <ligand>
        <name>S-adenosyl-L-methionine</name>
        <dbReference type="ChEBI" id="CHEBI:59789"/>
    </ligand>
</feature>
<feature type="binding site" evidence="2">
    <location>
        <position position="154"/>
    </location>
    <ligand>
        <name>substrate</name>
    </ligand>
</feature>
<feature type="binding site" evidence="2">
    <location>
        <position position="186"/>
    </location>
    <ligand>
        <name>substrate</name>
    </ligand>
</feature>
<feature type="binding site" evidence="2">
    <location>
        <begin position="223"/>
        <end position="226"/>
    </location>
    <ligand>
        <name>substrate</name>
    </ligand>
</feature>
<proteinExistence type="inferred from homology"/>
<accession>B2I9C6</accession>
<gene>
    <name evidence="2" type="primary">trmB</name>
    <name type="ordered locus">XfasM23_1982</name>
</gene>
<sequence>MMNLLSSDGVQVLPRPFTLNERRREVRSFVLRQGHFTPAQKRAFDHYWPRFGVDFIGQLRDLDVLFGRSAPKVLEVGFGNGAALRFAAQHEPRYDYIGIEVYAPGVGRLLNGLAEDGSRHVRLYHYDAVEVLNKEIVDGALDEIRIYFPDPWHKKRHHKRRLIQPLFATLLVRKLRVGGCLHMATDWADYAEQMWDVLDATPGLVNRAGLRGQVPCPDWRVQTRFERRGQNLGHRVWNLLYDRV</sequence>
<organism>
    <name type="scientific">Xylella fastidiosa (strain M23)</name>
    <dbReference type="NCBI Taxonomy" id="405441"/>
    <lineage>
        <taxon>Bacteria</taxon>
        <taxon>Pseudomonadati</taxon>
        <taxon>Pseudomonadota</taxon>
        <taxon>Gammaproteobacteria</taxon>
        <taxon>Lysobacterales</taxon>
        <taxon>Lysobacteraceae</taxon>
        <taxon>Xylella</taxon>
    </lineage>
</organism>
<dbReference type="EC" id="2.1.1.33" evidence="2"/>
<dbReference type="EMBL" id="CP001011">
    <property type="protein sequence ID" value="ACB93381.1"/>
    <property type="molecule type" value="Genomic_DNA"/>
</dbReference>
<dbReference type="RefSeq" id="WP_004090474.1">
    <property type="nucleotide sequence ID" value="NC_010577.1"/>
</dbReference>
<dbReference type="SMR" id="B2I9C6"/>
<dbReference type="GeneID" id="93905735"/>
<dbReference type="KEGG" id="xfn:XfasM23_1982"/>
<dbReference type="HOGENOM" id="CLU_050910_0_1_6"/>
<dbReference type="UniPathway" id="UPA00989"/>
<dbReference type="Proteomes" id="UP000001698">
    <property type="component" value="Chromosome"/>
</dbReference>
<dbReference type="GO" id="GO:0043527">
    <property type="term" value="C:tRNA methyltransferase complex"/>
    <property type="evidence" value="ECO:0007669"/>
    <property type="project" value="TreeGrafter"/>
</dbReference>
<dbReference type="GO" id="GO:0008176">
    <property type="term" value="F:tRNA (guanine(46)-N7)-methyltransferase activity"/>
    <property type="evidence" value="ECO:0007669"/>
    <property type="project" value="UniProtKB-UniRule"/>
</dbReference>
<dbReference type="FunFam" id="3.40.50.150:FF:000035">
    <property type="entry name" value="tRNA (guanine-N(7)-)-methyltransferase"/>
    <property type="match status" value="1"/>
</dbReference>
<dbReference type="Gene3D" id="3.40.50.150">
    <property type="entry name" value="Vaccinia Virus protein VP39"/>
    <property type="match status" value="1"/>
</dbReference>
<dbReference type="HAMAP" id="MF_01057">
    <property type="entry name" value="tRNA_methyltr_TrmB"/>
    <property type="match status" value="1"/>
</dbReference>
<dbReference type="InterPro" id="IPR029063">
    <property type="entry name" value="SAM-dependent_MTases_sf"/>
</dbReference>
<dbReference type="InterPro" id="IPR003358">
    <property type="entry name" value="tRNA_(Gua-N-7)_MeTrfase_Trmb"/>
</dbReference>
<dbReference type="InterPro" id="IPR055361">
    <property type="entry name" value="tRNA_methyltr_TrmB_bact"/>
</dbReference>
<dbReference type="NCBIfam" id="TIGR00091">
    <property type="entry name" value="tRNA (guanosine(46)-N7)-methyltransferase TrmB"/>
    <property type="match status" value="1"/>
</dbReference>
<dbReference type="PANTHER" id="PTHR23417">
    <property type="entry name" value="3-DEOXY-D-MANNO-OCTULOSONIC-ACID TRANSFERASE/TRNA GUANINE-N 7 - -METHYLTRANSFERASE"/>
    <property type="match status" value="1"/>
</dbReference>
<dbReference type="PANTHER" id="PTHR23417:SF14">
    <property type="entry name" value="PENTACOTRIPEPTIDE-REPEAT REGION OF PRORP DOMAIN-CONTAINING PROTEIN"/>
    <property type="match status" value="1"/>
</dbReference>
<dbReference type="Pfam" id="PF02390">
    <property type="entry name" value="Methyltransf_4"/>
    <property type="match status" value="1"/>
</dbReference>
<dbReference type="SUPFAM" id="SSF53335">
    <property type="entry name" value="S-adenosyl-L-methionine-dependent methyltransferases"/>
    <property type="match status" value="1"/>
</dbReference>
<dbReference type="PROSITE" id="PS51625">
    <property type="entry name" value="SAM_MT_TRMB"/>
    <property type="match status" value="1"/>
</dbReference>
<protein>
    <recommendedName>
        <fullName evidence="2">tRNA (guanine-N(7)-)-methyltransferase</fullName>
        <ecNumber evidence="2">2.1.1.33</ecNumber>
    </recommendedName>
    <alternativeName>
        <fullName evidence="2">tRNA (guanine(46)-N(7))-methyltransferase</fullName>
    </alternativeName>
    <alternativeName>
        <fullName evidence="2">tRNA(m7G46)-methyltransferase</fullName>
    </alternativeName>
</protein>
<evidence type="ECO:0000250" key="1"/>
<evidence type="ECO:0000255" key="2">
    <source>
        <dbReference type="HAMAP-Rule" id="MF_01057"/>
    </source>
</evidence>